<feature type="chain" id="PRO_1000015051" description="Small ribosomal subunit protein uS10">
    <location>
        <begin position="1"/>
        <end position="102"/>
    </location>
</feature>
<protein>
    <recommendedName>
        <fullName evidence="1">Small ribosomal subunit protein uS10</fullName>
    </recommendedName>
    <alternativeName>
        <fullName evidence="2">30S ribosomal protein S10</fullName>
    </alternativeName>
</protein>
<reference key="1">
    <citation type="journal article" date="2015" name="Microbiology">
        <title>Genome of Methanoregula boonei 6A8 reveals adaptations to oligotrophic peatland environments.</title>
        <authorList>
            <person name="Braeuer S."/>
            <person name="Cadillo-Quiroz H."/>
            <person name="Kyrpides N."/>
            <person name="Woyke T."/>
            <person name="Goodwin L."/>
            <person name="Detter C."/>
            <person name="Podell S."/>
            <person name="Yavitt J.B."/>
            <person name="Zinder S.H."/>
        </authorList>
    </citation>
    <scope>NUCLEOTIDE SEQUENCE [LARGE SCALE GENOMIC DNA]</scope>
    <source>
        <strain>DSM 21154 / JCM 14090 / 6A8</strain>
    </source>
</reference>
<proteinExistence type="inferred from homology"/>
<name>RS10_METB6</name>
<gene>
    <name evidence="1" type="primary">rps10</name>
    <name type="ordered locus">Mboo_0698</name>
</gene>
<keyword id="KW-1185">Reference proteome</keyword>
<keyword id="KW-0687">Ribonucleoprotein</keyword>
<keyword id="KW-0689">Ribosomal protein</keyword>
<accession>A7I655</accession>
<organism>
    <name type="scientific">Methanoregula boonei (strain DSM 21154 / JCM 14090 / 6A8)</name>
    <dbReference type="NCBI Taxonomy" id="456442"/>
    <lineage>
        <taxon>Archaea</taxon>
        <taxon>Methanobacteriati</taxon>
        <taxon>Methanobacteriota</taxon>
        <taxon>Stenosarchaea group</taxon>
        <taxon>Methanomicrobia</taxon>
        <taxon>Methanomicrobiales</taxon>
        <taxon>Methanoregulaceae</taxon>
        <taxon>Methanoregula</taxon>
    </lineage>
</organism>
<dbReference type="EMBL" id="CP000780">
    <property type="protein sequence ID" value="ABS55216.1"/>
    <property type="molecule type" value="Genomic_DNA"/>
</dbReference>
<dbReference type="RefSeq" id="WP_012106238.1">
    <property type="nucleotide sequence ID" value="NC_009712.1"/>
</dbReference>
<dbReference type="SMR" id="A7I655"/>
<dbReference type="STRING" id="456442.Mboo_0698"/>
<dbReference type="GeneID" id="5411552"/>
<dbReference type="KEGG" id="mbn:Mboo_0698"/>
<dbReference type="eggNOG" id="arCOG01758">
    <property type="taxonomic scope" value="Archaea"/>
</dbReference>
<dbReference type="HOGENOM" id="CLU_122625_0_1_2"/>
<dbReference type="OrthoDB" id="371736at2157"/>
<dbReference type="Proteomes" id="UP000002408">
    <property type="component" value="Chromosome"/>
</dbReference>
<dbReference type="GO" id="GO:0015935">
    <property type="term" value="C:small ribosomal subunit"/>
    <property type="evidence" value="ECO:0007669"/>
    <property type="project" value="InterPro"/>
</dbReference>
<dbReference type="GO" id="GO:0003735">
    <property type="term" value="F:structural constituent of ribosome"/>
    <property type="evidence" value="ECO:0007669"/>
    <property type="project" value="InterPro"/>
</dbReference>
<dbReference type="GO" id="GO:0000049">
    <property type="term" value="F:tRNA binding"/>
    <property type="evidence" value="ECO:0007669"/>
    <property type="project" value="UniProtKB-UniRule"/>
</dbReference>
<dbReference type="GO" id="GO:0006412">
    <property type="term" value="P:translation"/>
    <property type="evidence" value="ECO:0007669"/>
    <property type="project" value="UniProtKB-UniRule"/>
</dbReference>
<dbReference type="FunFam" id="3.30.70.600:FF:000004">
    <property type="entry name" value="30S ribosomal protein S10"/>
    <property type="match status" value="1"/>
</dbReference>
<dbReference type="Gene3D" id="3.30.70.600">
    <property type="entry name" value="Ribosomal protein S10 domain"/>
    <property type="match status" value="1"/>
</dbReference>
<dbReference type="HAMAP" id="MF_00508">
    <property type="entry name" value="Ribosomal_uS10"/>
    <property type="match status" value="1"/>
</dbReference>
<dbReference type="InterPro" id="IPR001848">
    <property type="entry name" value="Ribosomal_uS10"/>
</dbReference>
<dbReference type="InterPro" id="IPR018268">
    <property type="entry name" value="Ribosomal_uS10_CS"/>
</dbReference>
<dbReference type="InterPro" id="IPR027486">
    <property type="entry name" value="Ribosomal_uS10_dom"/>
</dbReference>
<dbReference type="InterPro" id="IPR036838">
    <property type="entry name" value="Ribosomal_uS10_dom_sf"/>
</dbReference>
<dbReference type="InterPro" id="IPR005729">
    <property type="entry name" value="Ribosomal_uS10_euk/arc"/>
</dbReference>
<dbReference type="NCBIfam" id="TIGR01046">
    <property type="entry name" value="uS10_euk_arch"/>
    <property type="match status" value="1"/>
</dbReference>
<dbReference type="PANTHER" id="PTHR11700">
    <property type="entry name" value="30S RIBOSOMAL PROTEIN S10 FAMILY MEMBER"/>
    <property type="match status" value="1"/>
</dbReference>
<dbReference type="Pfam" id="PF00338">
    <property type="entry name" value="Ribosomal_S10"/>
    <property type="match status" value="1"/>
</dbReference>
<dbReference type="PRINTS" id="PR00971">
    <property type="entry name" value="RIBOSOMALS10"/>
</dbReference>
<dbReference type="SMART" id="SM01403">
    <property type="entry name" value="Ribosomal_S10"/>
    <property type="match status" value="1"/>
</dbReference>
<dbReference type="SUPFAM" id="SSF54999">
    <property type="entry name" value="Ribosomal protein S10"/>
    <property type="match status" value="1"/>
</dbReference>
<dbReference type="PROSITE" id="PS00361">
    <property type="entry name" value="RIBOSOMAL_S10"/>
    <property type="match status" value="1"/>
</dbReference>
<sequence length="102" mass="11674">MQKARIRLTGTDFNKVETVCDRIREIAERTGVNLAGPIPLPTKRLVVPIRKSPDGEGTATFDRWQMRVHKRLIDIDADERALRQLMRIQVPKDIGIEIVLES</sequence>
<comment type="function">
    <text evidence="1">Involved in the binding of tRNA to the ribosomes.</text>
</comment>
<comment type="subunit">
    <text evidence="1">Part of the 30S ribosomal subunit.</text>
</comment>
<comment type="similarity">
    <text evidence="1">Belongs to the universal ribosomal protein uS10 family.</text>
</comment>
<evidence type="ECO:0000255" key="1">
    <source>
        <dbReference type="HAMAP-Rule" id="MF_00508"/>
    </source>
</evidence>
<evidence type="ECO:0000305" key="2"/>